<gene>
    <name type="primary">yebV</name>
    <name type="ordered locus">c2245</name>
</gene>
<accession>P64504</accession>
<accession>P76274</accession>
<dbReference type="EMBL" id="AE014075">
    <property type="protein sequence ID" value="AAN80704.1"/>
    <property type="status" value="ALT_INIT"/>
    <property type="molecule type" value="Genomic_DNA"/>
</dbReference>
<dbReference type="RefSeq" id="WP_001295499.1">
    <property type="nucleotide sequence ID" value="NZ_CP051263.1"/>
</dbReference>
<dbReference type="SMR" id="P64504"/>
<dbReference type="STRING" id="199310.c2245"/>
<dbReference type="KEGG" id="ecc:c2245"/>
<dbReference type="eggNOG" id="ENOG5032TBC">
    <property type="taxonomic scope" value="Bacteria"/>
</dbReference>
<dbReference type="HOGENOM" id="CLU_160612_0_0_6"/>
<dbReference type="Proteomes" id="UP000001410">
    <property type="component" value="Chromosome"/>
</dbReference>
<dbReference type="InterPro" id="IPR009950">
    <property type="entry name" value="DUF1480"/>
</dbReference>
<dbReference type="Pfam" id="PF07351">
    <property type="entry name" value="DUF1480"/>
    <property type="match status" value="1"/>
</dbReference>
<reference key="1">
    <citation type="journal article" date="2002" name="Proc. Natl. Acad. Sci. U.S.A.">
        <title>Extensive mosaic structure revealed by the complete genome sequence of uropathogenic Escherichia coli.</title>
        <authorList>
            <person name="Welch R.A."/>
            <person name="Burland V."/>
            <person name="Plunkett G. III"/>
            <person name="Redford P."/>
            <person name="Roesch P."/>
            <person name="Rasko D."/>
            <person name="Buckles E.L."/>
            <person name="Liou S.-R."/>
            <person name="Boutin A."/>
            <person name="Hackett J."/>
            <person name="Stroud D."/>
            <person name="Mayhew G.F."/>
            <person name="Rose D.J."/>
            <person name="Zhou S."/>
            <person name="Schwartz D.C."/>
            <person name="Perna N.T."/>
            <person name="Mobley H.L.T."/>
            <person name="Donnenberg M.S."/>
            <person name="Blattner F.R."/>
        </authorList>
    </citation>
    <scope>NUCLEOTIDE SEQUENCE [LARGE SCALE GENOMIC DNA]</scope>
    <source>
        <strain>CFT073 / ATCC 700928 / UPEC</strain>
    </source>
</reference>
<name>YEBV_ECOL6</name>
<sequence>MKTSVRIGAFEIDDGELHGESPGDRTLTIPCKSDPDLCMQLDAWDAETSIPALLNGEHSVLYRTRYDQQSDAWIMRLA</sequence>
<organism>
    <name type="scientific">Escherichia coli O6:H1 (strain CFT073 / ATCC 700928 / UPEC)</name>
    <dbReference type="NCBI Taxonomy" id="199310"/>
    <lineage>
        <taxon>Bacteria</taxon>
        <taxon>Pseudomonadati</taxon>
        <taxon>Pseudomonadota</taxon>
        <taxon>Gammaproteobacteria</taxon>
        <taxon>Enterobacterales</taxon>
        <taxon>Enterobacteriaceae</taxon>
        <taxon>Escherichia</taxon>
    </lineage>
</organism>
<feature type="chain" id="PRO_0000169058" description="Uncharacterized protein YebV">
    <location>
        <begin position="1"/>
        <end position="78"/>
    </location>
</feature>
<protein>
    <recommendedName>
        <fullName>Uncharacterized protein YebV</fullName>
    </recommendedName>
</protein>
<comment type="sequence caution" evidence="1">
    <conflict type="erroneous initiation">
        <sequence resource="EMBL-CDS" id="AAN80704"/>
    </conflict>
</comment>
<keyword id="KW-1185">Reference proteome</keyword>
<proteinExistence type="predicted"/>
<evidence type="ECO:0000305" key="1"/>